<accession>B8E9D2</accession>
<comment type="function">
    <text evidence="1">Master enzyme that delivers sulfur to a number of partners involved in Fe-S cluster assembly, tRNA modification or cofactor biosynthesis. Catalyzes the removal of elemental sulfur atoms from cysteine to produce alanine. Functions as a sulfur delivery protein for Fe-S cluster synthesis onto IscU, an Fe-S scaffold assembly protein, as well as other S acceptor proteins.</text>
</comment>
<comment type="catalytic activity">
    <reaction evidence="1">
        <text>(sulfur carrier)-H + L-cysteine = (sulfur carrier)-SH + L-alanine</text>
        <dbReference type="Rhea" id="RHEA:43892"/>
        <dbReference type="Rhea" id="RHEA-COMP:14737"/>
        <dbReference type="Rhea" id="RHEA-COMP:14739"/>
        <dbReference type="ChEBI" id="CHEBI:29917"/>
        <dbReference type="ChEBI" id="CHEBI:35235"/>
        <dbReference type="ChEBI" id="CHEBI:57972"/>
        <dbReference type="ChEBI" id="CHEBI:64428"/>
        <dbReference type="EC" id="2.8.1.7"/>
    </reaction>
</comment>
<comment type="cofactor">
    <cofactor evidence="1">
        <name>pyridoxal 5'-phosphate</name>
        <dbReference type="ChEBI" id="CHEBI:597326"/>
    </cofactor>
</comment>
<comment type="pathway">
    <text evidence="1">Cofactor biosynthesis; iron-sulfur cluster biosynthesis.</text>
</comment>
<comment type="subunit">
    <text evidence="1">Homodimer. Forms a heterotetramer with IscU, interacts with other sulfur acceptors.</text>
</comment>
<comment type="subcellular location">
    <subcellularLocation>
        <location evidence="1">Cytoplasm</location>
    </subcellularLocation>
</comment>
<comment type="similarity">
    <text evidence="1">Belongs to the class-V pyridoxal-phosphate-dependent aminotransferase family. NifS/IscS subfamily.</text>
</comment>
<organism>
    <name type="scientific">Shewanella baltica (strain OS223)</name>
    <dbReference type="NCBI Taxonomy" id="407976"/>
    <lineage>
        <taxon>Bacteria</taxon>
        <taxon>Pseudomonadati</taxon>
        <taxon>Pseudomonadota</taxon>
        <taxon>Gammaproteobacteria</taxon>
        <taxon>Alteromonadales</taxon>
        <taxon>Shewanellaceae</taxon>
        <taxon>Shewanella</taxon>
    </lineage>
</organism>
<feature type="chain" id="PRO_1000133121" description="Cysteine desulfurase IscS">
    <location>
        <begin position="1"/>
        <end position="404"/>
    </location>
</feature>
<feature type="active site" description="Cysteine persulfide intermediate" evidence="1">
    <location>
        <position position="328"/>
    </location>
</feature>
<feature type="binding site" evidence="1">
    <location>
        <begin position="75"/>
        <end position="76"/>
    </location>
    <ligand>
        <name>pyridoxal 5'-phosphate</name>
        <dbReference type="ChEBI" id="CHEBI:597326"/>
    </ligand>
</feature>
<feature type="binding site" evidence="1">
    <location>
        <position position="155"/>
    </location>
    <ligand>
        <name>pyridoxal 5'-phosphate</name>
        <dbReference type="ChEBI" id="CHEBI:597326"/>
    </ligand>
</feature>
<feature type="binding site" evidence="1">
    <location>
        <position position="183"/>
    </location>
    <ligand>
        <name>pyridoxal 5'-phosphate</name>
        <dbReference type="ChEBI" id="CHEBI:597326"/>
    </ligand>
</feature>
<feature type="binding site" evidence="1">
    <location>
        <begin position="203"/>
        <end position="205"/>
    </location>
    <ligand>
        <name>pyridoxal 5'-phosphate</name>
        <dbReference type="ChEBI" id="CHEBI:597326"/>
    </ligand>
</feature>
<feature type="binding site" evidence="1">
    <location>
        <position position="243"/>
    </location>
    <ligand>
        <name>pyridoxal 5'-phosphate</name>
        <dbReference type="ChEBI" id="CHEBI:597326"/>
    </ligand>
</feature>
<feature type="binding site" description="via persulfide group" evidence="1">
    <location>
        <position position="328"/>
    </location>
    <ligand>
        <name>[2Fe-2S] cluster</name>
        <dbReference type="ChEBI" id="CHEBI:190135"/>
        <note>ligand shared with IscU</note>
    </ligand>
</feature>
<feature type="modified residue" description="N6-(pyridoxal phosphate)lysine" evidence="1">
    <location>
        <position position="206"/>
    </location>
</feature>
<evidence type="ECO:0000255" key="1">
    <source>
        <dbReference type="HAMAP-Rule" id="MF_00331"/>
    </source>
</evidence>
<dbReference type="EC" id="2.8.1.7" evidence="1"/>
<dbReference type="EMBL" id="CP001252">
    <property type="protein sequence ID" value="ACK46465.1"/>
    <property type="molecule type" value="Genomic_DNA"/>
</dbReference>
<dbReference type="RefSeq" id="WP_012587530.1">
    <property type="nucleotide sequence ID" value="NC_011663.1"/>
</dbReference>
<dbReference type="SMR" id="B8E9D2"/>
<dbReference type="KEGG" id="sbp:Sbal223_1961"/>
<dbReference type="HOGENOM" id="CLU_003433_0_2_6"/>
<dbReference type="UniPathway" id="UPA00266"/>
<dbReference type="Proteomes" id="UP000002507">
    <property type="component" value="Chromosome"/>
</dbReference>
<dbReference type="GO" id="GO:1990221">
    <property type="term" value="C:L-cysteine desulfurase complex"/>
    <property type="evidence" value="ECO:0007669"/>
    <property type="project" value="UniProtKB-ARBA"/>
</dbReference>
<dbReference type="GO" id="GO:0051537">
    <property type="term" value="F:2 iron, 2 sulfur cluster binding"/>
    <property type="evidence" value="ECO:0007669"/>
    <property type="project" value="UniProtKB-UniRule"/>
</dbReference>
<dbReference type="GO" id="GO:0031071">
    <property type="term" value="F:cysteine desulfurase activity"/>
    <property type="evidence" value="ECO:0007669"/>
    <property type="project" value="UniProtKB-UniRule"/>
</dbReference>
<dbReference type="GO" id="GO:0046872">
    <property type="term" value="F:metal ion binding"/>
    <property type="evidence" value="ECO:0007669"/>
    <property type="project" value="UniProtKB-KW"/>
</dbReference>
<dbReference type="GO" id="GO:0030170">
    <property type="term" value="F:pyridoxal phosphate binding"/>
    <property type="evidence" value="ECO:0007669"/>
    <property type="project" value="UniProtKB-UniRule"/>
</dbReference>
<dbReference type="GO" id="GO:0044571">
    <property type="term" value="P:[2Fe-2S] cluster assembly"/>
    <property type="evidence" value="ECO:0007669"/>
    <property type="project" value="UniProtKB-UniRule"/>
</dbReference>
<dbReference type="FunFam" id="3.40.640.10:FF:000003">
    <property type="entry name" value="Cysteine desulfurase IscS"/>
    <property type="match status" value="1"/>
</dbReference>
<dbReference type="FunFam" id="3.90.1150.10:FF:000002">
    <property type="entry name" value="Cysteine desulfurase IscS"/>
    <property type="match status" value="1"/>
</dbReference>
<dbReference type="Gene3D" id="3.90.1150.10">
    <property type="entry name" value="Aspartate Aminotransferase, domain 1"/>
    <property type="match status" value="1"/>
</dbReference>
<dbReference type="Gene3D" id="3.40.640.10">
    <property type="entry name" value="Type I PLP-dependent aspartate aminotransferase-like (Major domain)"/>
    <property type="match status" value="1"/>
</dbReference>
<dbReference type="HAMAP" id="MF_00331">
    <property type="entry name" value="Cys_desulf_IscS"/>
    <property type="match status" value="1"/>
</dbReference>
<dbReference type="InterPro" id="IPR000192">
    <property type="entry name" value="Aminotrans_V_dom"/>
</dbReference>
<dbReference type="InterPro" id="IPR020578">
    <property type="entry name" value="Aminotrans_V_PyrdxlP_BS"/>
</dbReference>
<dbReference type="InterPro" id="IPR010240">
    <property type="entry name" value="Cys_deSase_IscS"/>
</dbReference>
<dbReference type="InterPro" id="IPR016454">
    <property type="entry name" value="Cysteine_dSase"/>
</dbReference>
<dbReference type="InterPro" id="IPR015424">
    <property type="entry name" value="PyrdxlP-dep_Trfase"/>
</dbReference>
<dbReference type="InterPro" id="IPR015421">
    <property type="entry name" value="PyrdxlP-dep_Trfase_major"/>
</dbReference>
<dbReference type="InterPro" id="IPR015422">
    <property type="entry name" value="PyrdxlP-dep_Trfase_small"/>
</dbReference>
<dbReference type="NCBIfam" id="TIGR02006">
    <property type="entry name" value="IscS"/>
    <property type="match status" value="1"/>
</dbReference>
<dbReference type="NCBIfam" id="NF002806">
    <property type="entry name" value="PRK02948.1"/>
    <property type="match status" value="1"/>
</dbReference>
<dbReference type="NCBIfam" id="NF010611">
    <property type="entry name" value="PRK14012.1"/>
    <property type="match status" value="1"/>
</dbReference>
<dbReference type="PANTHER" id="PTHR11601:SF34">
    <property type="entry name" value="CYSTEINE DESULFURASE"/>
    <property type="match status" value="1"/>
</dbReference>
<dbReference type="PANTHER" id="PTHR11601">
    <property type="entry name" value="CYSTEINE DESULFURYLASE FAMILY MEMBER"/>
    <property type="match status" value="1"/>
</dbReference>
<dbReference type="Pfam" id="PF00266">
    <property type="entry name" value="Aminotran_5"/>
    <property type="match status" value="1"/>
</dbReference>
<dbReference type="PIRSF" id="PIRSF005572">
    <property type="entry name" value="NifS"/>
    <property type="match status" value="1"/>
</dbReference>
<dbReference type="SUPFAM" id="SSF53383">
    <property type="entry name" value="PLP-dependent transferases"/>
    <property type="match status" value="1"/>
</dbReference>
<dbReference type="PROSITE" id="PS00595">
    <property type="entry name" value="AA_TRANSFER_CLASS_5"/>
    <property type="match status" value="1"/>
</dbReference>
<reference key="1">
    <citation type="submission" date="2008-12" db="EMBL/GenBank/DDBJ databases">
        <title>Complete sequence of chromosome of Shewanella baltica OS223.</title>
        <authorList>
            <consortium name="US DOE Joint Genome Institute"/>
            <person name="Lucas S."/>
            <person name="Copeland A."/>
            <person name="Lapidus A."/>
            <person name="Glavina del Rio T."/>
            <person name="Dalin E."/>
            <person name="Tice H."/>
            <person name="Bruce D."/>
            <person name="Goodwin L."/>
            <person name="Pitluck S."/>
            <person name="Chertkov O."/>
            <person name="Meincke L."/>
            <person name="Brettin T."/>
            <person name="Detter J.C."/>
            <person name="Han C."/>
            <person name="Kuske C.R."/>
            <person name="Larimer F."/>
            <person name="Land M."/>
            <person name="Hauser L."/>
            <person name="Kyrpides N."/>
            <person name="Ovchinnikova G."/>
            <person name="Brettar I."/>
            <person name="Rodrigues J."/>
            <person name="Konstantinidis K."/>
            <person name="Tiedje J."/>
        </authorList>
    </citation>
    <scope>NUCLEOTIDE SEQUENCE [LARGE SCALE GENOMIC DNA]</scope>
    <source>
        <strain>OS223</strain>
    </source>
</reference>
<sequence>MKLPIYLDYAATTPVDPRVAEKMFQCMTMDGIFGNPASRSHRYGWQAEEAVDIARNQIAELINADHREIVFTSGATESNNLAIKGVAHFYHKKGKHIITSKTEHKAVLDTCRQLEREGFEVTYLEPAANGIIPMERLEAAMRDDTILVSIMHVNNEIGVIHDIDAIGELCRSKGIIFHMDAAQSAGKVPIDVQATQVDLLSISGHKMYGPKGIGALYVRRKPRIRLEAQMHGGGHERGMRSGTLPTHQIVGLGEAAAIAKAEMASDDARIGALRDKLWNGIKHIEETYINGDAIERVSGSLNVSFNYVEGESLMMALKDLAVSSGSACTSASLEPSYVLRALGLNDEMAHSSIRFSIGRFTTEEEIDHAIEVITQSIDKLREMSPLWEMFKDGIDLNQVQWAHH</sequence>
<keyword id="KW-0001">2Fe-2S</keyword>
<keyword id="KW-0963">Cytoplasm</keyword>
<keyword id="KW-0408">Iron</keyword>
<keyword id="KW-0411">Iron-sulfur</keyword>
<keyword id="KW-0479">Metal-binding</keyword>
<keyword id="KW-0663">Pyridoxal phosphate</keyword>
<keyword id="KW-0808">Transferase</keyword>
<protein>
    <recommendedName>
        <fullName evidence="1">Cysteine desulfurase IscS</fullName>
        <ecNumber evidence="1">2.8.1.7</ecNumber>
    </recommendedName>
</protein>
<proteinExistence type="inferred from homology"/>
<name>ISCS_SHEB2</name>
<gene>
    <name evidence="1" type="primary">iscS</name>
    <name type="ordered locus">Sbal223_1961</name>
</gene>